<gene>
    <name evidence="1" type="primary">glmU</name>
    <name type="ordered locus">MGAS2096_Spy0381</name>
</gene>
<organism>
    <name type="scientific">Streptococcus pyogenes serotype M12 (strain MGAS2096)</name>
    <dbReference type="NCBI Taxonomy" id="370553"/>
    <lineage>
        <taxon>Bacteria</taxon>
        <taxon>Bacillati</taxon>
        <taxon>Bacillota</taxon>
        <taxon>Bacilli</taxon>
        <taxon>Lactobacillales</taxon>
        <taxon>Streptococcaceae</taxon>
        <taxon>Streptococcus</taxon>
    </lineage>
</organism>
<sequence>MTNYAIILAAGKGTRMTSDLPKVLHKVSGLTMLEHVFRSVKAISPEKAVTVIGHKSEKVRAVLADQSAFVHQTEQLGTGHAVMMAETQLEGLEGHTLVIAGDTPLITGESLKSLIDFHVNHKNVATILTATAQDPFGYGRIVRNKDGEVIKIVEQKDANEYEQQLKEINTGTYVFDNKRLFEALKCITTNNAQGEYYLTDVVAIFRANKEKVGAYILRDFNESLGVNDRVALATAETVMRQRITQKHMVNGVTFQNPETVYIESDVEIAPDVLIEGNVTLKGRTHIGSGTVLTNGTYIVDSEIGQGSIITNSMIESSVLAAGVTVGPYAHLRPGTTLGREVHIGNFVEVKGSHIGEKTKAGHLTYIGNAQVGSSVNVGAGTITVNYDGQNKYETVIGDHAFIWEQLDSHCTFGSWR</sequence>
<dbReference type="EC" id="2.7.7.23" evidence="1"/>
<dbReference type="EC" id="2.3.1.157" evidence="1"/>
<dbReference type="EMBL" id="CP000261">
    <property type="protein sequence ID" value="ABF35433.1"/>
    <property type="molecule type" value="Genomic_DNA"/>
</dbReference>
<dbReference type="SMR" id="Q1JD75"/>
<dbReference type="KEGG" id="spj:MGAS2096_Spy0381"/>
<dbReference type="HOGENOM" id="CLU_029499_15_2_9"/>
<dbReference type="UniPathway" id="UPA00113">
    <property type="reaction ID" value="UER00532"/>
</dbReference>
<dbReference type="UniPathway" id="UPA00113">
    <property type="reaction ID" value="UER00533"/>
</dbReference>
<dbReference type="UniPathway" id="UPA00973"/>
<dbReference type="GO" id="GO:0005737">
    <property type="term" value="C:cytoplasm"/>
    <property type="evidence" value="ECO:0007669"/>
    <property type="project" value="UniProtKB-SubCell"/>
</dbReference>
<dbReference type="GO" id="GO:0016020">
    <property type="term" value="C:membrane"/>
    <property type="evidence" value="ECO:0007669"/>
    <property type="project" value="GOC"/>
</dbReference>
<dbReference type="GO" id="GO:0019134">
    <property type="term" value="F:glucosamine-1-phosphate N-acetyltransferase activity"/>
    <property type="evidence" value="ECO:0007669"/>
    <property type="project" value="UniProtKB-UniRule"/>
</dbReference>
<dbReference type="GO" id="GO:0000287">
    <property type="term" value="F:magnesium ion binding"/>
    <property type="evidence" value="ECO:0007669"/>
    <property type="project" value="UniProtKB-UniRule"/>
</dbReference>
<dbReference type="GO" id="GO:0003977">
    <property type="term" value="F:UDP-N-acetylglucosamine diphosphorylase activity"/>
    <property type="evidence" value="ECO:0007669"/>
    <property type="project" value="UniProtKB-UniRule"/>
</dbReference>
<dbReference type="GO" id="GO:0000902">
    <property type="term" value="P:cell morphogenesis"/>
    <property type="evidence" value="ECO:0007669"/>
    <property type="project" value="UniProtKB-UniRule"/>
</dbReference>
<dbReference type="GO" id="GO:0071555">
    <property type="term" value="P:cell wall organization"/>
    <property type="evidence" value="ECO:0007669"/>
    <property type="project" value="UniProtKB-KW"/>
</dbReference>
<dbReference type="GO" id="GO:0009245">
    <property type="term" value="P:lipid A biosynthetic process"/>
    <property type="evidence" value="ECO:0007669"/>
    <property type="project" value="UniProtKB-UniRule"/>
</dbReference>
<dbReference type="GO" id="GO:0009252">
    <property type="term" value="P:peptidoglycan biosynthetic process"/>
    <property type="evidence" value="ECO:0007669"/>
    <property type="project" value="UniProtKB-UniRule"/>
</dbReference>
<dbReference type="GO" id="GO:0008360">
    <property type="term" value="P:regulation of cell shape"/>
    <property type="evidence" value="ECO:0007669"/>
    <property type="project" value="UniProtKB-KW"/>
</dbReference>
<dbReference type="GO" id="GO:0006048">
    <property type="term" value="P:UDP-N-acetylglucosamine biosynthetic process"/>
    <property type="evidence" value="ECO:0007669"/>
    <property type="project" value="UniProtKB-UniPathway"/>
</dbReference>
<dbReference type="CDD" id="cd02540">
    <property type="entry name" value="GT2_GlmU_N_bac"/>
    <property type="match status" value="1"/>
</dbReference>
<dbReference type="Gene3D" id="2.160.10.10">
    <property type="entry name" value="Hexapeptide repeat proteins"/>
    <property type="match status" value="1"/>
</dbReference>
<dbReference type="Gene3D" id="3.90.550.10">
    <property type="entry name" value="Spore Coat Polysaccharide Biosynthesis Protein SpsA, Chain A"/>
    <property type="match status" value="1"/>
</dbReference>
<dbReference type="HAMAP" id="MF_01631">
    <property type="entry name" value="GlmU"/>
    <property type="match status" value="1"/>
</dbReference>
<dbReference type="InterPro" id="IPR005882">
    <property type="entry name" value="Bifunctional_GlmU"/>
</dbReference>
<dbReference type="InterPro" id="IPR050065">
    <property type="entry name" value="GlmU-like"/>
</dbReference>
<dbReference type="InterPro" id="IPR001451">
    <property type="entry name" value="Hexapep"/>
</dbReference>
<dbReference type="InterPro" id="IPR005835">
    <property type="entry name" value="NTP_transferase_dom"/>
</dbReference>
<dbReference type="InterPro" id="IPR029044">
    <property type="entry name" value="Nucleotide-diphossugar_trans"/>
</dbReference>
<dbReference type="InterPro" id="IPR011004">
    <property type="entry name" value="Trimer_LpxA-like_sf"/>
</dbReference>
<dbReference type="NCBIfam" id="TIGR01173">
    <property type="entry name" value="glmU"/>
    <property type="match status" value="1"/>
</dbReference>
<dbReference type="NCBIfam" id="NF010934">
    <property type="entry name" value="PRK14354.1"/>
    <property type="match status" value="1"/>
</dbReference>
<dbReference type="PANTHER" id="PTHR43584:SF3">
    <property type="entry name" value="BIFUNCTIONAL PROTEIN GLMU"/>
    <property type="match status" value="1"/>
</dbReference>
<dbReference type="PANTHER" id="PTHR43584">
    <property type="entry name" value="NUCLEOTIDYL TRANSFERASE"/>
    <property type="match status" value="1"/>
</dbReference>
<dbReference type="Pfam" id="PF00132">
    <property type="entry name" value="Hexapep"/>
    <property type="match status" value="1"/>
</dbReference>
<dbReference type="Pfam" id="PF00483">
    <property type="entry name" value="NTP_transferase"/>
    <property type="match status" value="1"/>
</dbReference>
<dbReference type="SUPFAM" id="SSF53448">
    <property type="entry name" value="Nucleotide-diphospho-sugar transferases"/>
    <property type="match status" value="1"/>
</dbReference>
<dbReference type="SUPFAM" id="SSF51161">
    <property type="entry name" value="Trimeric LpxA-like enzymes"/>
    <property type="match status" value="1"/>
</dbReference>
<comment type="function">
    <text evidence="1">Catalyzes the last two sequential reactions in the de novo biosynthetic pathway for UDP-N-acetylglucosamine (UDP-GlcNAc). The C-terminal domain catalyzes the transfer of acetyl group from acetyl coenzyme A to glucosamine-1-phosphate (GlcN-1-P) to produce N-acetylglucosamine-1-phosphate (GlcNAc-1-P), which is converted into UDP-GlcNAc by the transfer of uridine 5-monophosphate (from uridine 5-triphosphate), a reaction catalyzed by the N-terminal domain.</text>
</comment>
<comment type="catalytic activity">
    <reaction evidence="1">
        <text>alpha-D-glucosamine 1-phosphate + acetyl-CoA = N-acetyl-alpha-D-glucosamine 1-phosphate + CoA + H(+)</text>
        <dbReference type="Rhea" id="RHEA:13725"/>
        <dbReference type="ChEBI" id="CHEBI:15378"/>
        <dbReference type="ChEBI" id="CHEBI:57287"/>
        <dbReference type="ChEBI" id="CHEBI:57288"/>
        <dbReference type="ChEBI" id="CHEBI:57776"/>
        <dbReference type="ChEBI" id="CHEBI:58516"/>
        <dbReference type="EC" id="2.3.1.157"/>
    </reaction>
</comment>
<comment type="catalytic activity">
    <reaction evidence="1">
        <text>N-acetyl-alpha-D-glucosamine 1-phosphate + UTP + H(+) = UDP-N-acetyl-alpha-D-glucosamine + diphosphate</text>
        <dbReference type="Rhea" id="RHEA:13509"/>
        <dbReference type="ChEBI" id="CHEBI:15378"/>
        <dbReference type="ChEBI" id="CHEBI:33019"/>
        <dbReference type="ChEBI" id="CHEBI:46398"/>
        <dbReference type="ChEBI" id="CHEBI:57705"/>
        <dbReference type="ChEBI" id="CHEBI:57776"/>
        <dbReference type="EC" id="2.7.7.23"/>
    </reaction>
</comment>
<comment type="cofactor">
    <cofactor evidence="1">
        <name>Mg(2+)</name>
        <dbReference type="ChEBI" id="CHEBI:18420"/>
    </cofactor>
    <text evidence="1">Binds 1 Mg(2+) ion per subunit.</text>
</comment>
<comment type="pathway">
    <text evidence="1">Nucleotide-sugar biosynthesis; UDP-N-acetyl-alpha-D-glucosamine biosynthesis; N-acetyl-alpha-D-glucosamine 1-phosphate from alpha-D-glucosamine 6-phosphate (route II): step 2/2.</text>
</comment>
<comment type="pathway">
    <text evidence="1">Nucleotide-sugar biosynthesis; UDP-N-acetyl-alpha-D-glucosamine biosynthesis; UDP-N-acetyl-alpha-D-glucosamine from N-acetyl-alpha-D-glucosamine 1-phosphate: step 1/1.</text>
</comment>
<comment type="pathway">
    <text evidence="1">Bacterial outer membrane biogenesis; LPS lipid A biosynthesis.</text>
</comment>
<comment type="subunit">
    <text evidence="1">Homotrimer.</text>
</comment>
<comment type="subcellular location">
    <subcellularLocation>
        <location evidence="1">Cytoplasm</location>
    </subcellularLocation>
</comment>
<comment type="similarity">
    <text evidence="1">In the N-terminal section; belongs to the N-acetylglucosamine-1-phosphate uridyltransferase family.</text>
</comment>
<comment type="similarity">
    <text evidence="1">In the C-terminal section; belongs to the transferase hexapeptide repeat family.</text>
</comment>
<protein>
    <recommendedName>
        <fullName evidence="1">Bifunctional protein GlmU</fullName>
    </recommendedName>
    <domain>
        <recommendedName>
            <fullName evidence="1">UDP-N-acetylglucosamine pyrophosphorylase</fullName>
            <ecNumber evidence="1">2.7.7.23</ecNumber>
        </recommendedName>
        <alternativeName>
            <fullName evidence="1">N-acetylglucosamine-1-phosphate uridyltransferase</fullName>
        </alternativeName>
    </domain>
    <domain>
        <recommendedName>
            <fullName evidence="1">Glucosamine-1-phosphate N-acetyltransferase</fullName>
            <ecNumber evidence="1">2.3.1.157</ecNumber>
        </recommendedName>
    </domain>
</protein>
<reference key="1">
    <citation type="journal article" date="2006" name="Proc. Natl. Acad. Sci. U.S.A.">
        <title>Molecular genetic anatomy of inter- and intraserotype variation in the human bacterial pathogen group A Streptococcus.</title>
        <authorList>
            <person name="Beres S.B."/>
            <person name="Richter E.W."/>
            <person name="Nagiec M.J."/>
            <person name="Sumby P."/>
            <person name="Porcella S.F."/>
            <person name="DeLeo F.R."/>
            <person name="Musser J.M."/>
        </authorList>
    </citation>
    <scope>NUCLEOTIDE SEQUENCE [LARGE SCALE GENOMIC DNA]</scope>
    <source>
        <strain>MGAS2096</strain>
    </source>
</reference>
<accession>Q1JD75</accession>
<name>GLMU_STRPB</name>
<proteinExistence type="inferred from homology"/>
<keyword id="KW-0012">Acyltransferase</keyword>
<keyword id="KW-0133">Cell shape</keyword>
<keyword id="KW-0961">Cell wall biogenesis/degradation</keyword>
<keyword id="KW-0963">Cytoplasm</keyword>
<keyword id="KW-0460">Magnesium</keyword>
<keyword id="KW-0479">Metal-binding</keyword>
<keyword id="KW-0511">Multifunctional enzyme</keyword>
<keyword id="KW-0548">Nucleotidyltransferase</keyword>
<keyword id="KW-0573">Peptidoglycan synthesis</keyword>
<keyword id="KW-0677">Repeat</keyword>
<keyword id="KW-0808">Transferase</keyword>
<feature type="chain" id="PRO_0000263160" description="Bifunctional protein GlmU">
    <location>
        <begin position="1"/>
        <end position="416"/>
    </location>
</feature>
<feature type="region of interest" description="Pyrophosphorylase" evidence="1">
    <location>
        <begin position="1"/>
        <end position="229"/>
    </location>
</feature>
<feature type="region of interest" description="Linker" evidence="1">
    <location>
        <begin position="230"/>
        <end position="250"/>
    </location>
</feature>
<feature type="region of interest" description="N-acetyltransferase" evidence="1">
    <location>
        <begin position="251"/>
        <end position="416"/>
    </location>
</feature>
<feature type="active site" description="Proton acceptor" evidence="1">
    <location>
        <position position="362"/>
    </location>
</feature>
<feature type="binding site" evidence="1">
    <location>
        <begin position="8"/>
        <end position="11"/>
    </location>
    <ligand>
        <name>UDP-N-acetyl-alpha-D-glucosamine</name>
        <dbReference type="ChEBI" id="CHEBI:57705"/>
    </ligand>
</feature>
<feature type="binding site" evidence="1">
    <location>
        <position position="22"/>
    </location>
    <ligand>
        <name>UDP-N-acetyl-alpha-D-glucosamine</name>
        <dbReference type="ChEBI" id="CHEBI:57705"/>
    </ligand>
</feature>
<feature type="binding site" evidence="1">
    <location>
        <position position="72"/>
    </location>
    <ligand>
        <name>UDP-N-acetyl-alpha-D-glucosamine</name>
        <dbReference type="ChEBI" id="CHEBI:57705"/>
    </ligand>
</feature>
<feature type="binding site" evidence="1">
    <location>
        <begin position="77"/>
        <end position="78"/>
    </location>
    <ligand>
        <name>UDP-N-acetyl-alpha-D-glucosamine</name>
        <dbReference type="ChEBI" id="CHEBI:57705"/>
    </ligand>
</feature>
<feature type="binding site" evidence="1">
    <location>
        <position position="102"/>
    </location>
    <ligand>
        <name>Mg(2+)</name>
        <dbReference type="ChEBI" id="CHEBI:18420"/>
    </ligand>
</feature>
<feature type="binding site" evidence="1">
    <location>
        <position position="139"/>
    </location>
    <ligand>
        <name>UDP-N-acetyl-alpha-D-glucosamine</name>
        <dbReference type="ChEBI" id="CHEBI:57705"/>
    </ligand>
</feature>
<feature type="binding site" evidence="1">
    <location>
        <position position="154"/>
    </location>
    <ligand>
        <name>UDP-N-acetyl-alpha-D-glucosamine</name>
        <dbReference type="ChEBI" id="CHEBI:57705"/>
    </ligand>
</feature>
<feature type="binding site" evidence="1">
    <location>
        <position position="169"/>
    </location>
    <ligand>
        <name>UDP-N-acetyl-alpha-D-glucosamine</name>
        <dbReference type="ChEBI" id="CHEBI:57705"/>
    </ligand>
</feature>
<feature type="binding site" evidence="1">
    <location>
        <position position="227"/>
    </location>
    <ligand>
        <name>Mg(2+)</name>
        <dbReference type="ChEBI" id="CHEBI:18420"/>
    </ligand>
</feature>
<feature type="binding site" evidence="1">
    <location>
        <position position="227"/>
    </location>
    <ligand>
        <name>UDP-N-acetyl-alpha-D-glucosamine</name>
        <dbReference type="ChEBI" id="CHEBI:57705"/>
    </ligand>
</feature>
<feature type="binding site" evidence="1">
    <location>
        <position position="332"/>
    </location>
    <ligand>
        <name>UDP-N-acetyl-alpha-D-glucosamine</name>
        <dbReference type="ChEBI" id="CHEBI:57705"/>
    </ligand>
</feature>
<feature type="binding site" evidence="1">
    <location>
        <position position="350"/>
    </location>
    <ligand>
        <name>UDP-N-acetyl-alpha-D-glucosamine</name>
        <dbReference type="ChEBI" id="CHEBI:57705"/>
    </ligand>
</feature>
<feature type="binding site" evidence="1">
    <location>
        <position position="365"/>
    </location>
    <ligand>
        <name>UDP-N-acetyl-alpha-D-glucosamine</name>
        <dbReference type="ChEBI" id="CHEBI:57705"/>
    </ligand>
</feature>
<feature type="binding site" evidence="1">
    <location>
        <position position="376"/>
    </location>
    <ligand>
        <name>UDP-N-acetyl-alpha-D-glucosamine</name>
        <dbReference type="ChEBI" id="CHEBI:57705"/>
    </ligand>
</feature>
<feature type="binding site" evidence="1">
    <location>
        <position position="379"/>
    </location>
    <ligand>
        <name>acetyl-CoA</name>
        <dbReference type="ChEBI" id="CHEBI:57288"/>
    </ligand>
</feature>
<feature type="binding site" evidence="1">
    <location>
        <begin position="385"/>
        <end position="386"/>
    </location>
    <ligand>
        <name>acetyl-CoA</name>
        <dbReference type="ChEBI" id="CHEBI:57288"/>
    </ligand>
</feature>
<evidence type="ECO:0000255" key="1">
    <source>
        <dbReference type="HAMAP-Rule" id="MF_01631"/>
    </source>
</evidence>